<protein>
    <recommendedName>
        <fullName evidence="2">Small ribosomal subunit protein eS25z</fullName>
    </recommendedName>
    <alternativeName>
        <fullName>40S ribosomal protein S25-1</fullName>
    </alternativeName>
</protein>
<organism>
    <name type="scientific">Arabidopsis thaliana</name>
    <name type="common">Mouse-ear cress</name>
    <dbReference type="NCBI Taxonomy" id="3702"/>
    <lineage>
        <taxon>Eukaryota</taxon>
        <taxon>Viridiplantae</taxon>
        <taxon>Streptophyta</taxon>
        <taxon>Embryophyta</taxon>
        <taxon>Tracheophyta</taxon>
        <taxon>Spermatophyta</taxon>
        <taxon>Magnoliopsida</taxon>
        <taxon>eudicotyledons</taxon>
        <taxon>Gunneridae</taxon>
        <taxon>Pentapetalae</taxon>
        <taxon>rosids</taxon>
        <taxon>malvids</taxon>
        <taxon>Brassicales</taxon>
        <taxon>Brassicaceae</taxon>
        <taxon>Camelineae</taxon>
        <taxon>Arabidopsis</taxon>
    </lineage>
</organism>
<comment type="similarity">
    <text evidence="3">Belongs to the eukaryotic ribosomal protein eS25 family.</text>
</comment>
<comment type="sequence caution" evidence="3">
    <conflict type="erroneous gene model prediction">
        <sequence resource="EMBL-CDS" id="AAD22303"/>
    </conflict>
</comment>
<accession>Q9SIW5</accession>
<accession>F4IKC4</accession>
<gene>
    <name type="primary">RPS25A</name>
    <name type="ordered locus">At2g16360</name>
    <name type="ORF">F16F14.14</name>
</gene>
<evidence type="ECO:0000256" key="1">
    <source>
        <dbReference type="SAM" id="MobiDB-lite"/>
    </source>
</evidence>
<evidence type="ECO:0000303" key="2">
    <source>
    </source>
</evidence>
<evidence type="ECO:0000305" key="3"/>
<reference key="1">
    <citation type="journal article" date="1999" name="Nature">
        <title>Sequence and analysis of chromosome 2 of the plant Arabidopsis thaliana.</title>
        <authorList>
            <person name="Lin X."/>
            <person name="Kaul S."/>
            <person name="Rounsley S.D."/>
            <person name="Shea T.P."/>
            <person name="Benito M.-I."/>
            <person name="Town C.D."/>
            <person name="Fujii C.Y."/>
            <person name="Mason T.M."/>
            <person name="Bowman C.L."/>
            <person name="Barnstead M.E."/>
            <person name="Feldblyum T.V."/>
            <person name="Buell C.R."/>
            <person name="Ketchum K.A."/>
            <person name="Lee J.J."/>
            <person name="Ronning C.M."/>
            <person name="Koo H.L."/>
            <person name="Moffat K.S."/>
            <person name="Cronin L.A."/>
            <person name="Shen M."/>
            <person name="Pai G."/>
            <person name="Van Aken S."/>
            <person name="Umayam L."/>
            <person name="Tallon L.J."/>
            <person name="Gill J.E."/>
            <person name="Adams M.D."/>
            <person name="Carrera A.J."/>
            <person name="Creasy T.H."/>
            <person name="Goodman H.M."/>
            <person name="Somerville C.R."/>
            <person name="Copenhaver G.P."/>
            <person name="Preuss D."/>
            <person name="Nierman W.C."/>
            <person name="White O."/>
            <person name="Eisen J.A."/>
            <person name="Salzberg S.L."/>
            <person name="Fraser C.M."/>
            <person name="Venter J.C."/>
        </authorList>
    </citation>
    <scope>NUCLEOTIDE SEQUENCE [LARGE SCALE GENOMIC DNA]</scope>
    <source>
        <strain>cv. Columbia</strain>
    </source>
</reference>
<reference key="2">
    <citation type="journal article" date="2017" name="Plant J.">
        <title>Araport11: a complete reannotation of the Arabidopsis thaliana reference genome.</title>
        <authorList>
            <person name="Cheng C.Y."/>
            <person name="Krishnakumar V."/>
            <person name="Chan A.P."/>
            <person name="Thibaud-Nissen F."/>
            <person name="Schobel S."/>
            <person name="Town C.D."/>
        </authorList>
    </citation>
    <scope>GENOME REANNOTATION</scope>
    <source>
        <strain>cv. Columbia</strain>
    </source>
</reference>
<reference key="3">
    <citation type="journal article" date="2001" name="Plant Physiol.">
        <title>The organization of cytoplasmic ribosomal protein genes in the Arabidopsis genome.</title>
        <authorList>
            <person name="Barakat A."/>
            <person name="Szick-Miranda K."/>
            <person name="Chang I.-F."/>
            <person name="Guyot R."/>
            <person name="Blanc G."/>
            <person name="Cooke R."/>
            <person name="Delseny M."/>
            <person name="Bailey-Serres J."/>
        </authorList>
    </citation>
    <scope>GENE FAMILY ORGANIZATION</scope>
    <scope>NOMENCLATURE</scope>
</reference>
<reference key="4">
    <citation type="journal article" date="2023" name="Plant Cell">
        <title>An updated nomenclature for plant ribosomal protein genes.</title>
        <authorList>
            <person name="Scarpin M.R."/>
            <person name="Busche M."/>
            <person name="Martinez R.E."/>
            <person name="Harper L.C."/>
            <person name="Reiser L."/>
            <person name="Szakonyi D."/>
            <person name="Merchante C."/>
            <person name="Lan T."/>
            <person name="Xiong W."/>
            <person name="Mo B."/>
            <person name="Tang G."/>
            <person name="Chen X."/>
            <person name="Bailey-Serres J."/>
            <person name="Browning K.S."/>
            <person name="Brunkard J.O."/>
        </authorList>
    </citation>
    <scope>NOMENCLATURE</scope>
</reference>
<dbReference type="EMBL" id="AC007047">
    <property type="protein sequence ID" value="AAD22303.1"/>
    <property type="status" value="ALT_SEQ"/>
    <property type="molecule type" value="Genomic_DNA"/>
</dbReference>
<dbReference type="EMBL" id="CP002685">
    <property type="status" value="NOT_ANNOTATED_CDS"/>
    <property type="molecule type" value="Genomic_DNA"/>
</dbReference>
<dbReference type="PIR" id="D84539">
    <property type="entry name" value="D84539"/>
</dbReference>
<dbReference type="SMR" id="Q9SIW5"/>
<dbReference type="BioGRID" id="1490">
    <property type="interactions" value="12"/>
</dbReference>
<dbReference type="FunCoup" id="Q9SIW5">
    <property type="interactions" value="2911"/>
</dbReference>
<dbReference type="STRING" id="3702.Q9SIW5"/>
<dbReference type="PeptideAtlas" id="Q9SIW5"/>
<dbReference type="Araport" id="AT2G16360"/>
<dbReference type="TAIR" id="AT2G16360"/>
<dbReference type="eggNOG" id="KOG1767">
    <property type="taxonomic scope" value="Eukaryota"/>
</dbReference>
<dbReference type="InParanoid" id="Q9SIW5"/>
<dbReference type="CD-CODE" id="4299E36E">
    <property type="entry name" value="Nucleolus"/>
</dbReference>
<dbReference type="PRO" id="PR:Q9SIW5"/>
<dbReference type="Proteomes" id="UP000006548">
    <property type="component" value="Chromosome 2"/>
</dbReference>
<dbReference type="ExpressionAtlas" id="Q9SIW5">
    <property type="expression patterns" value="baseline and differential"/>
</dbReference>
<dbReference type="GO" id="GO:0022627">
    <property type="term" value="C:cytosolic small ribosomal subunit"/>
    <property type="evidence" value="ECO:0000318"/>
    <property type="project" value="GO_Central"/>
</dbReference>
<dbReference type="GO" id="GO:0003735">
    <property type="term" value="F:structural constituent of ribosome"/>
    <property type="evidence" value="ECO:0000318"/>
    <property type="project" value="GO_Central"/>
</dbReference>
<dbReference type="FunFam" id="3.30.63.20:FF:000001">
    <property type="entry name" value="40S ribosomal protein S25"/>
    <property type="match status" value="1"/>
</dbReference>
<dbReference type="Gene3D" id="3.30.63.20">
    <property type="match status" value="1"/>
</dbReference>
<dbReference type="InterPro" id="IPR004977">
    <property type="entry name" value="Ribosomal_eS25"/>
</dbReference>
<dbReference type="PANTHER" id="PTHR12850">
    <property type="entry name" value="40S RIBOSOMAL PROTEIN S25"/>
    <property type="match status" value="1"/>
</dbReference>
<dbReference type="Pfam" id="PF03297">
    <property type="entry name" value="Ribosomal_S25"/>
    <property type="match status" value="1"/>
</dbReference>
<keyword id="KW-1185">Reference proteome</keyword>
<keyword id="KW-0687">Ribonucleoprotein</keyword>
<keyword id="KW-0689">Ribosomal protein</keyword>
<proteinExistence type="inferred from homology"/>
<sequence>MAPKKDKVPPPSSKPAKSGGGKQKKKKWSKGKQKEKVNNMVLFDQATYDKLMSEAPKFKLITPSILSDRLRINGSLARKAIRDLMVKGTIRMVSTHSSQQINTRATCLT</sequence>
<name>RS251_ARATH</name>
<feature type="chain" id="PRO_0000250534" description="Small ribosomal subunit protein eS25z">
    <location>
        <begin position="1"/>
        <end position="109"/>
    </location>
</feature>
<feature type="region of interest" description="Disordered" evidence="1">
    <location>
        <begin position="1"/>
        <end position="36"/>
    </location>
</feature>
<feature type="compositionally biased region" description="Basic residues" evidence="1">
    <location>
        <begin position="22"/>
        <end position="31"/>
    </location>
</feature>